<evidence type="ECO:0000255" key="1">
    <source>
        <dbReference type="HAMAP-Rule" id="MF_01227"/>
    </source>
</evidence>
<name>PYRG_ECOSM</name>
<accession>B1LQB3</accession>
<sequence length="545" mass="60374">MTTNYIFVTGGVVSSLGKGIAAASLAAILEARGLNVTIMKLDPYINVDPGTMSPIQHGEVFVTEDGAETDLDLGHYERFIRTKMSRRNNFTTGRIYSDVLRKERRGDYLGATVQVIPHITNAIKERVLEGGEGHDVVLVEIGGTVGDIESLPFLEAIRQMAVEIGREHTLFMHLTLVPYMAASGEVKTKPTQHSVKELLSIGIQPDILICRSDRAVPANERAKIALFCNVPEKAVISLKDVDSIYKIPGLLKSQGLDDYICKRFSLNCPEANLSEWEQVIFEEANPVSEVTIGMVGKYIELPDAYKSVIEALKHGGLKNRVSVNIKLIDSQDVETRGVEILKGLDAILVPGGFGYRGVEGMITTARFARENNIPYLGICLGMQVALIDYARHVANMENANSTEFVPDCKYPVVALITEWRDENGNVEVRSEKSDLGGTMRLGAQQCQLVDDSLVRQLYNAPTIVERHRHRYEVNNMLLKQIEDAGLRVAGRSGDDQLVEIIEVPNHPWFVACQFHPEFTSTPRDGHPLFAGFVKAASEFQKRQAK</sequence>
<gene>
    <name evidence="1" type="primary">pyrG</name>
    <name type="ordered locus">EcSMS35_2918</name>
</gene>
<comment type="function">
    <text evidence="1">Catalyzes the ATP-dependent amination of UTP to CTP with either L-glutamine or ammonia as the source of nitrogen. Regulates intracellular CTP levels through interactions with the four ribonucleotide triphosphates.</text>
</comment>
<comment type="catalytic activity">
    <reaction evidence="1">
        <text>UTP + L-glutamine + ATP + H2O = CTP + L-glutamate + ADP + phosphate + 2 H(+)</text>
        <dbReference type="Rhea" id="RHEA:26426"/>
        <dbReference type="ChEBI" id="CHEBI:15377"/>
        <dbReference type="ChEBI" id="CHEBI:15378"/>
        <dbReference type="ChEBI" id="CHEBI:29985"/>
        <dbReference type="ChEBI" id="CHEBI:30616"/>
        <dbReference type="ChEBI" id="CHEBI:37563"/>
        <dbReference type="ChEBI" id="CHEBI:43474"/>
        <dbReference type="ChEBI" id="CHEBI:46398"/>
        <dbReference type="ChEBI" id="CHEBI:58359"/>
        <dbReference type="ChEBI" id="CHEBI:456216"/>
        <dbReference type="EC" id="6.3.4.2"/>
    </reaction>
</comment>
<comment type="catalytic activity">
    <reaction evidence="1">
        <text>L-glutamine + H2O = L-glutamate + NH4(+)</text>
        <dbReference type="Rhea" id="RHEA:15889"/>
        <dbReference type="ChEBI" id="CHEBI:15377"/>
        <dbReference type="ChEBI" id="CHEBI:28938"/>
        <dbReference type="ChEBI" id="CHEBI:29985"/>
        <dbReference type="ChEBI" id="CHEBI:58359"/>
    </reaction>
</comment>
<comment type="catalytic activity">
    <reaction evidence="1">
        <text>UTP + NH4(+) + ATP = CTP + ADP + phosphate + 2 H(+)</text>
        <dbReference type="Rhea" id="RHEA:16597"/>
        <dbReference type="ChEBI" id="CHEBI:15378"/>
        <dbReference type="ChEBI" id="CHEBI:28938"/>
        <dbReference type="ChEBI" id="CHEBI:30616"/>
        <dbReference type="ChEBI" id="CHEBI:37563"/>
        <dbReference type="ChEBI" id="CHEBI:43474"/>
        <dbReference type="ChEBI" id="CHEBI:46398"/>
        <dbReference type="ChEBI" id="CHEBI:456216"/>
    </reaction>
</comment>
<comment type="activity regulation">
    <text evidence="1">Allosterically activated by GTP, when glutamine is the substrate; GTP has no effect on the reaction when ammonia is the substrate. The allosteric effector GTP functions by stabilizing the protein conformation that binds the tetrahedral intermediate(s) formed during glutamine hydrolysis. Inhibited by the product CTP, via allosteric rather than competitive inhibition.</text>
</comment>
<comment type="pathway">
    <text evidence="1">Pyrimidine metabolism; CTP biosynthesis via de novo pathway; CTP from UDP: step 2/2.</text>
</comment>
<comment type="subunit">
    <text evidence="1">Homotetramer.</text>
</comment>
<comment type="miscellaneous">
    <text evidence="1">CTPSs have evolved a hybrid strategy for distinguishing between UTP and CTP. The overlapping regions of the product feedback inhibitory and substrate sites recognize a common feature in both compounds, the triphosphate moiety. To differentiate isosteric substrate and product pyrimidine rings, an additional pocket far from the expected kinase/ligase catalytic site, specifically recognizes the cytosine and ribose portions of the product inhibitor.</text>
</comment>
<comment type="similarity">
    <text evidence="1">Belongs to the CTP synthase family.</text>
</comment>
<proteinExistence type="inferred from homology"/>
<protein>
    <recommendedName>
        <fullName evidence="1">CTP synthase</fullName>
        <ecNumber evidence="1">6.3.4.2</ecNumber>
    </recommendedName>
    <alternativeName>
        <fullName evidence="1">Cytidine 5'-triphosphate synthase</fullName>
    </alternativeName>
    <alternativeName>
        <fullName evidence="1">Cytidine triphosphate synthetase</fullName>
        <shortName evidence="1">CTP synthetase</shortName>
        <shortName evidence="1">CTPS</shortName>
    </alternativeName>
    <alternativeName>
        <fullName evidence="1">UTP--ammonia ligase</fullName>
    </alternativeName>
</protein>
<organism>
    <name type="scientific">Escherichia coli (strain SMS-3-5 / SECEC)</name>
    <dbReference type="NCBI Taxonomy" id="439855"/>
    <lineage>
        <taxon>Bacteria</taxon>
        <taxon>Pseudomonadati</taxon>
        <taxon>Pseudomonadota</taxon>
        <taxon>Gammaproteobacteria</taxon>
        <taxon>Enterobacterales</taxon>
        <taxon>Enterobacteriaceae</taxon>
        <taxon>Escherichia</taxon>
    </lineage>
</organism>
<reference key="1">
    <citation type="journal article" date="2008" name="J. Bacteriol.">
        <title>Insights into the environmental resistance gene pool from the genome sequence of the multidrug-resistant environmental isolate Escherichia coli SMS-3-5.</title>
        <authorList>
            <person name="Fricke W.F."/>
            <person name="Wright M.S."/>
            <person name="Lindell A.H."/>
            <person name="Harkins D.M."/>
            <person name="Baker-Austin C."/>
            <person name="Ravel J."/>
            <person name="Stepanauskas R."/>
        </authorList>
    </citation>
    <scope>NUCLEOTIDE SEQUENCE [LARGE SCALE GENOMIC DNA]</scope>
    <source>
        <strain>SMS-3-5 / SECEC</strain>
    </source>
</reference>
<dbReference type="EC" id="6.3.4.2" evidence="1"/>
<dbReference type="EMBL" id="CP000970">
    <property type="protein sequence ID" value="ACB16319.1"/>
    <property type="molecule type" value="Genomic_DNA"/>
</dbReference>
<dbReference type="RefSeq" id="WP_000210878.1">
    <property type="nucleotide sequence ID" value="NC_010498.1"/>
</dbReference>
<dbReference type="SMR" id="B1LQB3"/>
<dbReference type="MEROPS" id="C26.964"/>
<dbReference type="GeneID" id="93779218"/>
<dbReference type="KEGG" id="ecm:EcSMS35_2918"/>
<dbReference type="HOGENOM" id="CLU_011675_5_0_6"/>
<dbReference type="UniPathway" id="UPA00159">
    <property type="reaction ID" value="UER00277"/>
</dbReference>
<dbReference type="Proteomes" id="UP000007011">
    <property type="component" value="Chromosome"/>
</dbReference>
<dbReference type="GO" id="GO:0005829">
    <property type="term" value="C:cytosol"/>
    <property type="evidence" value="ECO:0007669"/>
    <property type="project" value="TreeGrafter"/>
</dbReference>
<dbReference type="GO" id="GO:0005524">
    <property type="term" value="F:ATP binding"/>
    <property type="evidence" value="ECO:0007669"/>
    <property type="project" value="UniProtKB-KW"/>
</dbReference>
<dbReference type="GO" id="GO:0003883">
    <property type="term" value="F:CTP synthase activity"/>
    <property type="evidence" value="ECO:0007669"/>
    <property type="project" value="UniProtKB-UniRule"/>
</dbReference>
<dbReference type="GO" id="GO:0004359">
    <property type="term" value="F:glutaminase activity"/>
    <property type="evidence" value="ECO:0007669"/>
    <property type="project" value="RHEA"/>
</dbReference>
<dbReference type="GO" id="GO:0042802">
    <property type="term" value="F:identical protein binding"/>
    <property type="evidence" value="ECO:0007669"/>
    <property type="project" value="TreeGrafter"/>
</dbReference>
<dbReference type="GO" id="GO:0046872">
    <property type="term" value="F:metal ion binding"/>
    <property type="evidence" value="ECO:0007669"/>
    <property type="project" value="UniProtKB-KW"/>
</dbReference>
<dbReference type="GO" id="GO:0044210">
    <property type="term" value="P:'de novo' CTP biosynthetic process"/>
    <property type="evidence" value="ECO:0007669"/>
    <property type="project" value="UniProtKB-UniRule"/>
</dbReference>
<dbReference type="GO" id="GO:0019856">
    <property type="term" value="P:pyrimidine nucleobase biosynthetic process"/>
    <property type="evidence" value="ECO:0007669"/>
    <property type="project" value="TreeGrafter"/>
</dbReference>
<dbReference type="CDD" id="cd03113">
    <property type="entry name" value="CTPS_N"/>
    <property type="match status" value="1"/>
</dbReference>
<dbReference type="CDD" id="cd01746">
    <property type="entry name" value="GATase1_CTP_Synthase"/>
    <property type="match status" value="1"/>
</dbReference>
<dbReference type="FunFam" id="3.40.50.300:FF:000009">
    <property type="entry name" value="CTP synthase"/>
    <property type="match status" value="1"/>
</dbReference>
<dbReference type="FunFam" id="3.40.50.880:FF:000002">
    <property type="entry name" value="CTP synthase"/>
    <property type="match status" value="1"/>
</dbReference>
<dbReference type="Gene3D" id="3.40.50.880">
    <property type="match status" value="1"/>
</dbReference>
<dbReference type="Gene3D" id="3.40.50.300">
    <property type="entry name" value="P-loop containing nucleotide triphosphate hydrolases"/>
    <property type="match status" value="1"/>
</dbReference>
<dbReference type="HAMAP" id="MF_01227">
    <property type="entry name" value="PyrG"/>
    <property type="match status" value="1"/>
</dbReference>
<dbReference type="InterPro" id="IPR029062">
    <property type="entry name" value="Class_I_gatase-like"/>
</dbReference>
<dbReference type="InterPro" id="IPR004468">
    <property type="entry name" value="CTP_synthase"/>
</dbReference>
<dbReference type="InterPro" id="IPR017456">
    <property type="entry name" value="CTP_synthase_N"/>
</dbReference>
<dbReference type="InterPro" id="IPR017926">
    <property type="entry name" value="GATASE"/>
</dbReference>
<dbReference type="InterPro" id="IPR033828">
    <property type="entry name" value="GATase1_CTP_Synthase"/>
</dbReference>
<dbReference type="InterPro" id="IPR027417">
    <property type="entry name" value="P-loop_NTPase"/>
</dbReference>
<dbReference type="NCBIfam" id="NF003792">
    <property type="entry name" value="PRK05380.1"/>
    <property type="match status" value="1"/>
</dbReference>
<dbReference type="NCBIfam" id="TIGR00337">
    <property type="entry name" value="PyrG"/>
    <property type="match status" value="1"/>
</dbReference>
<dbReference type="PANTHER" id="PTHR11550">
    <property type="entry name" value="CTP SYNTHASE"/>
    <property type="match status" value="1"/>
</dbReference>
<dbReference type="PANTHER" id="PTHR11550:SF0">
    <property type="entry name" value="CTP SYNTHASE-RELATED"/>
    <property type="match status" value="1"/>
</dbReference>
<dbReference type="Pfam" id="PF06418">
    <property type="entry name" value="CTP_synth_N"/>
    <property type="match status" value="1"/>
</dbReference>
<dbReference type="Pfam" id="PF00117">
    <property type="entry name" value="GATase"/>
    <property type="match status" value="1"/>
</dbReference>
<dbReference type="SUPFAM" id="SSF52317">
    <property type="entry name" value="Class I glutamine amidotransferase-like"/>
    <property type="match status" value="1"/>
</dbReference>
<dbReference type="SUPFAM" id="SSF52540">
    <property type="entry name" value="P-loop containing nucleoside triphosphate hydrolases"/>
    <property type="match status" value="1"/>
</dbReference>
<dbReference type="PROSITE" id="PS51273">
    <property type="entry name" value="GATASE_TYPE_1"/>
    <property type="match status" value="1"/>
</dbReference>
<keyword id="KW-0067">ATP-binding</keyword>
<keyword id="KW-0315">Glutamine amidotransferase</keyword>
<keyword id="KW-0436">Ligase</keyword>
<keyword id="KW-0460">Magnesium</keyword>
<keyword id="KW-0479">Metal-binding</keyword>
<keyword id="KW-0547">Nucleotide-binding</keyword>
<keyword id="KW-0665">Pyrimidine biosynthesis</keyword>
<feature type="chain" id="PRO_1000139450" description="CTP synthase">
    <location>
        <begin position="1"/>
        <end position="545"/>
    </location>
</feature>
<feature type="domain" description="Glutamine amidotransferase type-1" evidence="1">
    <location>
        <begin position="291"/>
        <end position="542"/>
    </location>
</feature>
<feature type="region of interest" description="Amidoligase domain" evidence="1">
    <location>
        <begin position="1"/>
        <end position="266"/>
    </location>
</feature>
<feature type="active site" description="Nucleophile; for glutamine hydrolysis" evidence="1">
    <location>
        <position position="379"/>
    </location>
</feature>
<feature type="active site" evidence="1">
    <location>
        <position position="515"/>
    </location>
</feature>
<feature type="active site" evidence="1">
    <location>
        <position position="517"/>
    </location>
</feature>
<feature type="binding site" evidence="1">
    <location>
        <position position="14"/>
    </location>
    <ligand>
        <name>CTP</name>
        <dbReference type="ChEBI" id="CHEBI:37563"/>
        <note>allosteric inhibitor</note>
    </ligand>
</feature>
<feature type="binding site" evidence="1">
    <location>
        <position position="14"/>
    </location>
    <ligand>
        <name>UTP</name>
        <dbReference type="ChEBI" id="CHEBI:46398"/>
    </ligand>
</feature>
<feature type="binding site" evidence="1">
    <location>
        <begin position="15"/>
        <end position="20"/>
    </location>
    <ligand>
        <name>ATP</name>
        <dbReference type="ChEBI" id="CHEBI:30616"/>
    </ligand>
</feature>
<feature type="binding site" evidence="1">
    <location>
        <position position="72"/>
    </location>
    <ligand>
        <name>ATP</name>
        <dbReference type="ChEBI" id="CHEBI:30616"/>
    </ligand>
</feature>
<feature type="binding site" evidence="1">
    <location>
        <position position="72"/>
    </location>
    <ligand>
        <name>Mg(2+)</name>
        <dbReference type="ChEBI" id="CHEBI:18420"/>
    </ligand>
</feature>
<feature type="binding site" evidence="1">
    <location>
        <position position="140"/>
    </location>
    <ligand>
        <name>Mg(2+)</name>
        <dbReference type="ChEBI" id="CHEBI:18420"/>
    </ligand>
</feature>
<feature type="binding site" evidence="1">
    <location>
        <begin position="147"/>
        <end position="149"/>
    </location>
    <ligand>
        <name>CTP</name>
        <dbReference type="ChEBI" id="CHEBI:37563"/>
        <note>allosteric inhibitor</note>
    </ligand>
</feature>
<feature type="binding site" evidence="1">
    <location>
        <begin position="187"/>
        <end position="192"/>
    </location>
    <ligand>
        <name>CTP</name>
        <dbReference type="ChEBI" id="CHEBI:37563"/>
        <note>allosteric inhibitor</note>
    </ligand>
</feature>
<feature type="binding site" evidence="1">
    <location>
        <begin position="187"/>
        <end position="192"/>
    </location>
    <ligand>
        <name>UTP</name>
        <dbReference type="ChEBI" id="CHEBI:46398"/>
    </ligand>
</feature>
<feature type="binding site" evidence="1">
    <location>
        <position position="223"/>
    </location>
    <ligand>
        <name>CTP</name>
        <dbReference type="ChEBI" id="CHEBI:37563"/>
        <note>allosteric inhibitor</note>
    </ligand>
</feature>
<feature type="binding site" evidence="1">
    <location>
        <position position="223"/>
    </location>
    <ligand>
        <name>UTP</name>
        <dbReference type="ChEBI" id="CHEBI:46398"/>
    </ligand>
</feature>
<feature type="binding site" evidence="1">
    <location>
        <begin position="239"/>
        <end position="241"/>
    </location>
    <ligand>
        <name>ATP</name>
        <dbReference type="ChEBI" id="CHEBI:30616"/>
    </ligand>
</feature>
<feature type="binding site" evidence="1">
    <location>
        <position position="352"/>
    </location>
    <ligand>
        <name>L-glutamine</name>
        <dbReference type="ChEBI" id="CHEBI:58359"/>
    </ligand>
</feature>
<feature type="binding site" evidence="1">
    <location>
        <begin position="380"/>
        <end position="383"/>
    </location>
    <ligand>
        <name>L-glutamine</name>
        <dbReference type="ChEBI" id="CHEBI:58359"/>
    </ligand>
</feature>
<feature type="binding site" evidence="1">
    <location>
        <position position="403"/>
    </location>
    <ligand>
        <name>L-glutamine</name>
        <dbReference type="ChEBI" id="CHEBI:58359"/>
    </ligand>
</feature>
<feature type="binding site" evidence="1">
    <location>
        <position position="470"/>
    </location>
    <ligand>
        <name>L-glutamine</name>
        <dbReference type="ChEBI" id="CHEBI:58359"/>
    </ligand>
</feature>